<reference evidence="6 8" key="1">
    <citation type="journal article" date="2003" name="Gene">
        <title>Molecular cloning and characterization of AP-2 epsilon, a fifth member of the AP-2 family.</title>
        <authorList>
            <person name="Tummala R."/>
            <person name="Romano R.-A."/>
            <person name="Fuchs E."/>
            <person name="Sinha S."/>
        </authorList>
    </citation>
    <scope>NUCLEOTIDE SEQUENCE [MRNA]</scope>
    <scope>TISSUE SPECIFICITY</scope>
</reference>
<reference evidence="9" key="2">
    <citation type="journal article" date="2006" name="Nature">
        <title>The DNA sequence and biological annotation of human chromosome 1.</title>
        <authorList>
            <person name="Gregory S.G."/>
            <person name="Barlow K.F."/>
            <person name="McLay K.E."/>
            <person name="Kaul R."/>
            <person name="Swarbreck D."/>
            <person name="Dunham A."/>
            <person name="Scott C.E."/>
            <person name="Howe K.L."/>
            <person name="Woodfine K."/>
            <person name="Spencer C.C.A."/>
            <person name="Jones M.C."/>
            <person name="Gillson C."/>
            <person name="Searle S."/>
            <person name="Zhou Y."/>
            <person name="Kokocinski F."/>
            <person name="McDonald L."/>
            <person name="Evans R."/>
            <person name="Phillips K."/>
            <person name="Atkinson A."/>
            <person name="Cooper R."/>
            <person name="Jones C."/>
            <person name="Hall R.E."/>
            <person name="Andrews T.D."/>
            <person name="Lloyd C."/>
            <person name="Ainscough R."/>
            <person name="Almeida J.P."/>
            <person name="Ambrose K.D."/>
            <person name="Anderson F."/>
            <person name="Andrew R.W."/>
            <person name="Ashwell R.I.S."/>
            <person name="Aubin K."/>
            <person name="Babbage A.K."/>
            <person name="Bagguley C.L."/>
            <person name="Bailey J."/>
            <person name="Beasley H."/>
            <person name="Bethel G."/>
            <person name="Bird C.P."/>
            <person name="Bray-Allen S."/>
            <person name="Brown J.Y."/>
            <person name="Brown A.J."/>
            <person name="Buckley D."/>
            <person name="Burton J."/>
            <person name="Bye J."/>
            <person name="Carder C."/>
            <person name="Chapman J.C."/>
            <person name="Clark S.Y."/>
            <person name="Clarke G."/>
            <person name="Clee C."/>
            <person name="Cobley V."/>
            <person name="Collier R.E."/>
            <person name="Corby N."/>
            <person name="Coville G.J."/>
            <person name="Davies J."/>
            <person name="Deadman R."/>
            <person name="Dunn M."/>
            <person name="Earthrowl M."/>
            <person name="Ellington A.G."/>
            <person name="Errington H."/>
            <person name="Frankish A."/>
            <person name="Frankland J."/>
            <person name="French L."/>
            <person name="Garner P."/>
            <person name="Garnett J."/>
            <person name="Gay L."/>
            <person name="Ghori M.R.J."/>
            <person name="Gibson R."/>
            <person name="Gilby L.M."/>
            <person name="Gillett W."/>
            <person name="Glithero R.J."/>
            <person name="Grafham D.V."/>
            <person name="Griffiths C."/>
            <person name="Griffiths-Jones S."/>
            <person name="Grocock R."/>
            <person name="Hammond S."/>
            <person name="Harrison E.S.I."/>
            <person name="Hart E."/>
            <person name="Haugen E."/>
            <person name="Heath P.D."/>
            <person name="Holmes S."/>
            <person name="Holt K."/>
            <person name="Howden P.J."/>
            <person name="Hunt A.R."/>
            <person name="Hunt S.E."/>
            <person name="Hunter G."/>
            <person name="Isherwood J."/>
            <person name="James R."/>
            <person name="Johnson C."/>
            <person name="Johnson D."/>
            <person name="Joy A."/>
            <person name="Kay M."/>
            <person name="Kershaw J.K."/>
            <person name="Kibukawa M."/>
            <person name="Kimberley A.M."/>
            <person name="King A."/>
            <person name="Knights A.J."/>
            <person name="Lad H."/>
            <person name="Laird G."/>
            <person name="Lawlor S."/>
            <person name="Leongamornlert D.A."/>
            <person name="Lloyd D.M."/>
            <person name="Loveland J."/>
            <person name="Lovell J."/>
            <person name="Lush M.J."/>
            <person name="Lyne R."/>
            <person name="Martin S."/>
            <person name="Mashreghi-Mohammadi M."/>
            <person name="Matthews L."/>
            <person name="Matthews N.S.W."/>
            <person name="McLaren S."/>
            <person name="Milne S."/>
            <person name="Mistry S."/>
            <person name="Moore M.J.F."/>
            <person name="Nickerson T."/>
            <person name="O'Dell C.N."/>
            <person name="Oliver K."/>
            <person name="Palmeiri A."/>
            <person name="Palmer S.A."/>
            <person name="Parker A."/>
            <person name="Patel D."/>
            <person name="Pearce A.V."/>
            <person name="Peck A.I."/>
            <person name="Pelan S."/>
            <person name="Phelps K."/>
            <person name="Phillimore B.J."/>
            <person name="Plumb R."/>
            <person name="Rajan J."/>
            <person name="Raymond C."/>
            <person name="Rouse G."/>
            <person name="Saenphimmachak C."/>
            <person name="Sehra H.K."/>
            <person name="Sheridan E."/>
            <person name="Shownkeen R."/>
            <person name="Sims S."/>
            <person name="Skuce C.D."/>
            <person name="Smith M."/>
            <person name="Steward C."/>
            <person name="Subramanian S."/>
            <person name="Sycamore N."/>
            <person name="Tracey A."/>
            <person name="Tromans A."/>
            <person name="Van Helmond Z."/>
            <person name="Wall M."/>
            <person name="Wallis J.M."/>
            <person name="White S."/>
            <person name="Whitehead S.L."/>
            <person name="Wilkinson J.E."/>
            <person name="Willey D.L."/>
            <person name="Williams H."/>
            <person name="Wilming L."/>
            <person name="Wray P.W."/>
            <person name="Wu Z."/>
            <person name="Coulson A."/>
            <person name="Vaudin M."/>
            <person name="Sulston J.E."/>
            <person name="Durbin R.M."/>
            <person name="Hubbard T."/>
            <person name="Wooster R."/>
            <person name="Dunham I."/>
            <person name="Carter N.P."/>
            <person name="McVean G."/>
            <person name="Ross M.T."/>
            <person name="Harrow J."/>
            <person name="Olson M.V."/>
            <person name="Beck S."/>
            <person name="Rogers J."/>
            <person name="Bentley D.R."/>
        </authorList>
    </citation>
    <scope>NUCLEOTIDE SEQUENCE [LARGE SCALE GENOMIC DNA]</scope>
</reference>
<reference key="3">
    <citation type="submission" date="2005-09" db="EMBL/GenBank/DDBJ databases">
        <authorList>
            <person name="Mural R.J."/>
            <person name="Istrail S."/>
            <person name="Sutton G.G."/>
            <person name="Florea L."/>
            <person name="Halpern A.L."/>
            <person name="Mobarry C.M."/>
            <person name="Lippert R."/>
            <person name="Walenz B."/>
            <person name="Shatkay H."/>
            <person name="Dew I."/>
            <person name="Miller J.R."/>
            <person name="Flanigan M.J."/>
            <person name="Edwards N.J."/>
            <person name="Bolanos R."/>
            <person name="Fasulo D."/>
            <person name="Halldorsson B.V."/>
            <person name="Hannenhalli S."/>
            <person name="Turner R."/>
            <person name="Yooseph S."/>
            <person name="Lu F."/>
            <person name="Nusskern D.R."/>
            <person name="Shue B.C."/>
            <person name="Zheng X.H."/>
            <person name="Zhong F."/>
            <person name="Delcher A.L."/>
            <person name="Huson D.H."/>
            <person name="Kravitz S.A."/>
            <person name="Mouchard L."/>
            <person name="Reinert K."/>
            <person name="Remington K.A."/>
            <person name="Clark A.G."/>
            <person name="Waterman M.S."/>
            <person name="Eichler E.E."/>
            <person name="Adams M.D."/>
            <person name="Hunkapiller M.W."/>
            <person name="Myers E.W."/>
            <person name="Venter J.C."/>
        </authorList>
    </citation>
    <scope>NUCLEOTIDE SEQUENCE [LARGE SCALE GENOMIC DNA]</scope>
</reference>
<reference evidence="7" key="4">
    <citation type="journal article" date="2004" name="Genome Res.">
        <title>The status, quality, and expansion of the NIH full-length cDNA project: the Mammalian Gene Collection (MGC).</title>
        <authorList>
            <consortium name="The MGC Project Team"/>
        </authorList>
    </citation>
    <scope>NUCLEOTIDE SEQUENCE [LARGE SCALE MRNA]</scope>
    <source>
        <tissue evidence="7">Uterus</tissue>
    </source>
</reference>
<proteinExistence type="evidence at protein level"/>
<comment type="function">
    <text evidence="1">Sequence-specific DNA-binding protein that interacts with inducible viral and cellular enhancer elements to regulate transcription of selected genes. AP-2 factors bind to the consensus sequence 5'-GCCNNNGGC-3' and activate genes involved in a large spectrum of important biological functions including proper eye, face, body wall, limb and neural tube development. They also suppress a number of genes including MCAM/MUC18, C/EBP alpha and MYC. AP-2-epsilon may play a role in the development of the CNS and in cartilage differentiation (By similarity).</text>
</comment>
<comment type="subunit">
    <text evidence="1">Binds DNA as a dimer. Can form homodimers or heterodimers with other AP-2 family members (By similarity).</text>
</comment>
<comment type="subcellular location">
    <subcellularLocation>
        <location evidence="3">Nucleus</location>
    </subcellularLocation>
</comment>
<comment type="tissue specificity">
    <text evidence="5">Expressed in skin, primary keratinocytes, immortalized keratinocytes, and HeLa cell line.</text>
</comment>
<comment type="similarity">
    <text evidence="4">Belongs to the AP-2 family.</text>
</comment>
<comment type="sequence caution" evidence="6">
    <conflict type="erroneous initiation">
        <sequence resource="EMBL-CDS" id="AAH41175"/>
    </conflict>
</comment>
<comment type="sequence caution" evidence="6">
    <conflict type="erroneous gene model prediction">
        <sequence resource="EMBL-CDS" id="EAX07409"/>
    </conflict>
</comment>
<comment type="online information" name="Wikipedia">
    <link uri="https://en.wikipedia.org/wiki/Activating_protein_2"/>
    <text>Activating protein 2 entry</text>
</comment>
<organism>
    <name type="scientific">Homo sapiens</name>
    <name type="common">Human</name>
    <dbReference type="NCBI Taxonomy" id="9606"/>
    <lineage>
        <taxon>Eukaryota</taxon>
        <taxon>Metazoa</taxon>
        <taxon>Chordata</taxon>
        <taxon>Craniata</taxon>
        <taxon>Vertebrata</taxon>
        <taxon>Euteleostomi</taxon>
        <taxon>Mammalia</taxon>
        <taxon>Eutheria</taxon>
        <taxon>Euarchontoglires</taxon>
        <taxon>Primates</taxon>
        <taxon>Haplorrhini</taxon>
        <taxon>Catarrhini</taxon>
        <taxon>Hominidae</taxon>
        <taxon>Homo</taxon>
    </lineage>
</organism>
<name>AP2E_HUMAN</name>
<accession>Q6VUC0</accession>
<accession>Q8IW12</accession>
<feature type="chain" id="PRO_0000309516" description="Transcription factor AP-2-epsilon">
    <location>
        <begin position="1"/>
        <end position="442"/>
    </location>
</feature>
<feature type="region of interest" description="H-S-H (helix-span-helix), dimerization" evidence="4">
    <location>
        <begin position="287"/>
        <end position="417"/>
    </location>
</feature>
<feature type="short sequence motif" description="PPxY motif" evidence="4">
    <location>
        <begin position="54"/>
        <end position="59"/>
    </location>
</feature>
<feature type="modified residue" description="Phosphoserine; by PKA" evidence="2">
    <location>
        <position position="246"/>
    </location>
</feature>
<evidence type="ECO:0000250" key="1"/>
<evidence type="ECO:0000250" key="2">
    <source>
        <dbReference type="UniProtKB" id="P05549"/>
    </source>
</evidence>
<evidence type="ECO:0000250" key="3">
    <source>
        <dbReference type="UniProtKB" id="Q6VUP9"/>
    </source>
</evidence>
<evidence type="ECO:0000255" key="4"/>
<evidence type="ECO:0000269" key="5">
    <source>
    </source>
</evidence>
<evidence type="ECO:0000305" key="6"/>
<evidence type="ECO:0000312" key="7">
    <source>
        <dbReference type="EMBL" id="AAH41175.1"/>
    </source>
</evidence>
<evidence type="ECO:0000312" key="8">
    <source>
        <dbReference type="EMBL" id="AAQ91614.1"/>
    </source>
</evidence>
<evidence type="ECO:0000312" key="9">
    <source>
        <dbReference type="EMBL" id="CAI23520.1"/>
    </source>
</evidence>
<gene>
    <name evidence="9" type="primary">TFAP2E</name>
</gene>
<sequence length="442" mass="46212">MLVHTYSAMERPDGLGAAAGGARLSSLPQAAYGPAPPLCHTPAATAAAEFQPPYFPPPYPQPPLPYGQAPDAAAAFPHLAGDPYGGLAPLAQPQPPQAAWAAPRAAARAHEEPPGLLAPPARALGLDPRRDYATAVPRLLHGLADGAHGLADAPLGLPGLAAAPGLEDLQAMDEPGMSLLDQSVIKKVPIPSKASSLSALSLAKDSLVGGITNPGEVFCSVPGRLSLLSSTSKYKVTVGEVQRRLSPPECLNASLLGGVLRRAKSKNGGRCLRERLEKIGLNLPAGRRKAANVTLLTSLVEGEAVHLARDFGYVCETEFPAKAAAEYLCRQHADPGELHSRKSMLLAAKQICKEFADLMAQDRSPLGNSRPALILEPGVQSCLTHFSLITHGFGGPAICAALTAFQNYLLESLKGLDKMFLSSVGSGHGETKASEKDAKHRK</sequence>
<keyword id="KW-0010">Activator</keyword>
<keyword id="KW-0238">DNA-binding</keyword>
<keyword id="KW-0539">Nucleus</keyword>
<keyword id="KW-0597">Phosphoprotein</keyword>
<keyword id="KW-1267">Proteomics identification</keyword>
<keyword id="KW-1185">Reference proteome</keyword>
<keyword id="KW-0804">Transcription</keyword>
<keyword id="KW-0805">Transcription regulation</keyword>
<protein>
    <recommendedName>
        <fullName>Transcription factor AP-2-epsilon</fullName>
        <shortName>AP2-epsilon</shortName>
    </recommendedName>
    <alternativeName>
        <fullName>Activating enhancer-binding protein 2-epsilon</fullName>
    </alternativeName>
</protein>
<dbReference type="EMBL" id="AY326454">
    <property type="protein sequence ID" value="AAQ91614.1"/>
    <property type="molecule type" value="mRNA"/>
</dbReference>
<dbReference type="EMBL" id="AL157951">
    <property type="protein sequence ID" value="CAI23520.1"/>
    <property type="molecule type" value="Genomic_DNA"/>
</dbReference>
<dbReference type="EMBL" id="AC004865">
    <property type="protein sequence ID" value="CAI23520.1"/>
    <property type="status" value="JOINED"/>
    <property type="molecule type" value="Genomic_DNA"/>
</dbReference>
<dbReference type="EMBL" id="CH471059">
    <property type="protein sequence ID" value="EAX07409.1"/>
    <property type="status" value="ALT_SEQ"/>
    <property type="molecule type" value="Genomic_DNA"/>
</dbReference>
<dbReference type="EMBL" id="BC041175">
    <property type="protein sequence ID" value="AAH41175.1"/>
    <property type="status" value="ALT_INIT"/>
    <property type="molecule type" value="mRNA"/>
</dbReference>
<dbReference type="CCDS" id="CCDS393.2"/>
<dbReference type="RefSeq" id="NP_848643.2">
    <property type="nucleotide sequence ID" value="NM_178548.4"/>
</dbReference>
<dbReference type="SMR" id="Q6VUC0"/>
<dbReference type="BioGRID" id="130894">
    <property type="interactions" value="1"/>
</dbReference>
<dbReference type="FunCoup" id="Q6VUC0">
    <property type="interactions" value="637"/>
</dbReference>
<dbReference type="STRING" id="9606.ENSP00000362332"/>
<dbReference type="iPTMnet" id="Q6VUC0"/>
<dbReference type="PhosphoSitePlus" id="Q6VUC0"/>
<dbReference type="BioMuta" id="TFAP2E"/>
<dbReference type="DMDM" id="74749476"/>
<dbReference type="jPOST" id="Q6VUC0"/>
<dbReference type="MassIVE" id="Q6VUC0"/>
<dbReference type="PaxDb" id="9606-ENSP00000362332"/>
<dbReference type="PeptideAtlas" id="Q6VUC0"/>
<dbReference type="ProteomicsDB" id="67731"/>
<dbReference type="Antibodypedia" id="31581">
    <property type="antibodies" value="51 antibodies from 16 providers"/>
</dbReference>
<dbReference type="DNASU" id="339488"/>
<dbReference type="Ensembl" id="ENST00000373235.4">
    <property type="protein sequence ID" value="ENSP00000362332.3"/>
    <property type="gene ID" value="ENSG00000116819.9"/>
</dbReference>
<dbReference type="GeneID" id="339488"/>
<dbReference type="KEGG" id="hsa:339488"/>
<dbReference type="MANE-Select" id="ENST00000373235.4">
    <property type="protein sequence ID" value="ENSP00000362332.3"/>
    <property type="RefSeq nucleotide sequence ID" value="NM_178548.4"/>
    <property type="RefSeq protein sequence ID" value="NP_848643.2"/>
</dbReference>
<dbReference type="UCSC" id="uc010ohy.3">
    <property type="organism name" value="human"/>
</dbReference>
<dbReference type="AGR" id="HGNC:30774"/>
<dbReference type="CTD" id="339488"/>
<dbReference type="DisGeNET" id="339488"/>
<dbReference type="GeneCards" id="TFAP2E"/>
<dbReference type="HGNC" id="HGNC:30774">
    <property type="gene designation" value="TFAP2E"/>
</dbReference>
<dbReference type="HPA" id="ENSG00000116819">
    <property type="expression patterns" value="Tissue enriched (brain)"/>
</dbReference>
<dbReference type="MIM" id="614428">
    <property type="type" value="gene"/>
</dbReference>
<dbReference type="neXtProt" id="NX_Q6VUC0"/>
<dbReference type="OpenTargets" id="ENSG00000116819"/>
<dbReference type="PharmGKB" id="PA134992283"/>
<dbReference type="VEuPathDB" id="HostDB:ENSG00000116819"/>
<dbReference type="eggNOG" id="KOG3811">
    <property type="taxonomic scope" value="Eukaryota"/>
</dbReference>
<dbReference type="GeneTree" id="ENSGT00950000182848"/>
<dbReference type="HOGENOM" id="CLU_035175_4_1_1"/>
<dbReference type="InParanoid" id="Q6VUC0"/>
<dbReference type="OMA" id="QEAGYPH"/>
<dbReference type="OrthoDB" id="6252992at2759"/>
<dbReference type="PAN-GO" id="Q6VUC0">
    <property type="GO annotations" value="6 GO annotations based on evolutionary models"/>
</dbReference>
<dbReference type="PhylomeDB" id="Q6VUC0"/>
<dbReference type="TreeFam" id="TF313718"/>
<dbReference type="PathwayCommons" id="Q6VUC0"/>
<dbReference type="Reactome" id="R-HSA-8866904">
    <property type="pathway name" value="Negative regulation of activity of TFAP2 (AP-2) family transcription factors"/>
</dbReference>
<dbReference type="Reactome" id="R-HSA-8866907">
    <property type="pathway name" value="Activation of the TFAP2 (AP-2) family of transcription factors"/>
</dbReference>
<dbReference type="BioGRID-ORCS" id="339488">
    <property type="hits" value="19 hits in 1165 CRISPR screens"/>
</dbReference>
<dbReference type="GenomeRNAi" id="339488"/>
<dbReference type="Pharos" id="Q6VUC0">
    <property type="development level" value="Tbio"/>
</dbReference>
<dbReference type="PRO" id="PR:Q6VUC0"/>
<dbReference type="Proteomes" id="UP000005640">
    <property type="component" value="Chromosome 1"/>
</dbReference>
<dbReference type="RNAct" id="Q6VUC0">
    <property type="molecule type" value="protein"/>
</dbReference>
<dbReference type="Bgee" id="ENSG00000116819">
    <property type="expression patterns" value="Expressed in cerebellar hemisphere and 105 other cell types or tissues"/>
</dbReference>
<dbReference type="GO" id="GO:0000785">
    <property type="term" value="C:chromatin"/>
    <property type="evidence" value="ECO:0000247"/>
    <property type="project" value="NTNU_SB"/>
</dbReference>
<dbReference type="GO" id="GO:0005634">
    <property type="term" value="C:nucleus"/>
    <property type="evidence" value="ECO:0000318"/>
    <property type="project" value="GO_Central"/>
</dbReference>
<dbReference type="GO" id="GO:0001228">
    <property type="term" value="F:DNA-binding transcription activator activity, RNA polymerase II-specific"/>
    <property type="evidence" value="ECO:0000318"/>
    <property type="project" value="GO_Central"/>
</dbReference>
<dbReference type="GO" id="GO:0000981">
    <property type="term" value="F:DNA-binding transcription factor activity, RNA polymerase II-specific"/>
    <property type="evidence" value="ECO:0000247"/>
    <property type="project" value="NTNU_SB"/>
</dbReference>
<dbReference type="GO" id="GO:0042802">
    <property type="term" value="F:identical protein binding"/>
    <property type="evidence" value="ECO:0007669"/>
    <property type="project" value="Ensembl"/>
</dbReference>
<dbReference type="GO" id="GO:0000978">
    <property type="term" value="F:RNA polymerase II cis-regulatory region sequence-specific DNA binding"/>
    <property type="evidence" value="ECO:0007669"/>
    <property type="project" value="Ensembl"/>
</dbReference>
<dbReference type="GO" id="GO:0000977">
    <property type="term" value="F:RNA polymerase II transcription regulatory region sequence-specific DNA binding"/>
    <property type="evidence" value="ECO:0000318"/>
    <property type="project" value="GO_Central"/>
</dbReference>
<dbReference type="GO" id="GO:1990837">
    <property type="term" value="F:sequence-specific double-stranded DNA binding"/>
    <property type="evidence" value="ECO:0000314"/>
    <property type="project" value="ARUK-UCL"/>
</dbReference>
<dbReference type="GO" id="GO:0045944">
    <property type="term" value="P:positive regulation of transcription by RNA polymerase II"/>
    <property type="evidence" value="ECO:0000318"/>
    <property type="project" value="GO_Central"/>
</dbReference>
<dbReference type="GO" id="GO:0042127">
    <property type="term" value="P:regulation of cell population proliferation"/>
    <property type="evidence" value="ECO:0000318"/>
    <property type="project" value="GO_Central"/>
</dbReference>
<dbReference type="InterPro" id="IPR004979">
    <property type="entry name" value="TF_AP2"/>
</dbReference>
<dbReference type="InterPro" id="IPR013854">
    <property type="entry name" value="TF_AP2_C"/>
</dbReference>
<dbReference type="PANTHER" id="PTHR10812">
    <property type="entry name" value="TRANSCRIPTION FACTOR AP-2"/>
    <property type="match status" value="1"/>
</dbReference>
<dbReference type="PANTHER" id="PTHR10812:SF13">
    <property type="entry name" value="TRANSCRIPTION FACTOR AP-2-EPSILON"/>
    <property type="match status" value="1"/>
</dbReference>
<dbReference type="Pfam" id="PF03299">
    <property type="entry name" value="TF_AP-2"/>
    <property type="match status" value="1"/>
</dbReference>
<dbReference type="PRINTS" id="PR01748">
    <property type="entry name" value="AP2TNSCPFCT"/>
</dbReference>